<name>BYR4_SCHPO</name>
<accession>Q10951</accession>
<comment type="function">
    <text evidence="2">Has an essential role in ensuring cytokinesis and septation occur only once during mitosis. It does so by interacting with the ras1 signaling pathways, thereby suppressing them.</text>
</comment>
<comment type="subunit">
    <text evidence="2">Interacts with hyperphosphorylated cdc11.</text>
</comment>
<comment type="interaction">
    <interactant intactId="EBI-1997311">
        <id>Q10951</id>
    </interactant>
    <interactant intactId="EBI-1997321">
        <id>P36618</id>
        <label>cdc16</label>
    </interactant>
    <organismsDiffer>false</organismsDiffer>
    <experiments>6</experiments>
</comment>
<comment type="interaction">
    <interactant intactId="EBI-1997311">
        <id>Q10951</id>
    </interactant>
    <interactant intactId="EBI-1999803">
        <id>P87027</id>
        <label>spg1</label>
    </interactant>
    <organismsDiffer>false</organismsDiffer>
    <experiments>7</experiments>
</comment>
<comment type="subcellular location">
    <subcellularLocation>
        <location evidence="3">Cytoplasm</location>
    </subcellularLocation>
</comment>
<comment type="similarity">
    <text evidence="5">To yeast BFA1.</text>
</comment>
<sequence>MTEVECWDDDPDFASDVDNASLFTQSIATTSASTSVDDGFSFDDSISRLNSLSISDVPSAHSRVEQWNQQVHNLNHELSSNKNRISSNVEGYEDDFSFDEEGEEGNNEFNTLRPNKYQDADVDEFNTIRASETASQRPPIPFSSDTLKKTYLSSENDARYPSVSDSPYCESEGFSSFEDDFEIDPDTDLNSILHRKQNRMDPKASFSSVEQSSLRTPSSAHNDDGFWDDFDIDFNNETESIFRKKIRSPNTINQKHPYISSTISYQPNVHQDAKYYPLCKDIFPSLANENPHSDNPNLKYSSKTLSKRDTSSHYPETLKASSKHSSPVKGNSSISSTWTPSNLKIYHSKNSMGLMDLDALKTVASNSKYRTKPKNCKTYGDGTELDTLDELPVDYEFELKLRKKQTTKVSGTPKSKHAGSTQEWHSHTTPRSTSKHENNLNNITNSAKNEHIRSQRQHKTHAAPSKELTKESLSNDQLSVKEKRRHHKKAPTLIQNLNSPRTPKIVGKMRYNPTKHCWEGNDYAIRDFDTPISPSRPALISNISTKKGIQVVGNMVYDPTRLRWIDNSISGQEAEDPFSGFDDLEDTDSTSQYLNENSGSFNGSINSIINFPDMSEIYDVGPEFEKKQFSEDIQWRKRIDGWFFSFKNDDRSRLWELYNILNAEQ</sequence>
<evidence type="ECO:0000256" key="1">
    <source>
        <dbReference type="SAM" id="MobiDB-lite"/>
    </source>
</evidence>
<evidence type="ECO:0000269" key="2">
    <source>
    </source>
</evidence>
<evidence type="ECO:0000269" key="3">
    <source>
    </source>
</evidence>
<evidence type="ECO:0000269" key="4">
    <source>
    </source>
</evidence>
<evidence type="ECO:0000305" key="5"/>
<protein>
    <recommendedName>
        <fullName>Protein byr4</fullName>
    </recommendedName>
</protein>
<reference key="1">
    <citation type="journal article" date="1996" name="J. Cell Biol.">
        <title>A novel suppressor of ras1 in fission yeast, byr4, is a dosage-dependent inhibitor of cytokinesis.</title>
        <authorList>
            <person name="Song K."/>
            <person name="Mach K.E."/>
            <person name="Chen C.-Y."/>
            <person name="Reynolds T."/>
            <person name="Albright C.F."/>
        </authorList>
    </citation>
    <scope>NUCLEOTIDE SEQUENCE [GENOMIC DNA]</scope>
    <scope>CHARACTERIZATION</scope>
</reference>
<reference key="2">
    <citation type="journal article" date="2002" name="Nature">
        <title>The genome sequence of Schizosaccharomyces pombe.</title>
        <authorList>
            <person name="Wood V."/>
            <person name="Gwilliam R."/>
            <person name="Rajandream M.A."/>
            <person name="Lyne M.H."/>
            <person name="Lyne R."/>
            <person name="Stewart A."/>
            <person name="Sgouros J.G."/>
            <person name="Peat N."/>
            <person name="Hayles J."/>
            <person name="Baker S.G."/>
            <person name="Basham D."/>
            <person name="Bowman S."/>
            <person name="Brooks K."/>
            <person name="Brown D."/>
            <person name="Brown S."/>
            <person name="Chillingworth T."/>
            <person name="Churcher C.M."/>
            <person name="Collins M."/>
            <person name="Connor R."/>
            <person name="Cronin A."/>
            <person name="Davis P."/>
            <person name="Feltwell T."/>
            <person name="Fraser A."/>
            <person name="Gentles S."/>
            <person name="Goble A."/>
            <person name="Hamlin N."/>
            <person name="Harris D.E."/>
            <person name="Hidalgo J."/>
            <person name="Hodgson G."/>
            <person name="Holroyd S."/>
            <person name="Hornsby T."/>
            <person name="Howarth S."/>
            <person name="Huckle E.J."/>
            <person name="Hunt S."/>
            <person name="Jagels K."/>
            <person name="James K.D."/>
            <person name="Jones L."/>
            <person name="Jones M."/>
            <person name="Leather S."/>
            <person name="McDonald S."/>
            <person name="McLean J."/>
            <person name="Mooney P."/>
            <person name="Moule S."/>
            <person name="Mungall K.L."/>
            <person name="Murphy L.D."/>
            <person name="Niblett D."/>
            <person name="Odell C."/>
            <person name="Oliver K."/>
            <person name="O'Neil S."/>
            <person name="Pearson D."/>
            <person name="Quail M.A."/>
            <person name="Rabbinowitsch E."/>
            <person name="Rutherford K.M."/>
            <person name="Rutter S."/>
            <person name="Saunders D."/>
            <person name="Seeger K."/>
            <person name="Sharp S."/>
            <person name="Skelton J."/>
            <person name="Simmonds M.N."/>
            <person name="Squares R."/>
            <person name="Squares S."/>
            <person name="Stevens K."/>
            <person name="Taylor K."/>
            <person name="Taylor R.G."/>
            <person name="Tivey A."/>
            <person name="Walsh S.V."/>
            <person name="Warren T."/>
            <person name="Whitehead S."/>
            <person name="Woodward J.R."/>
            <person name="Volckaert G."/>
            <person name="Aert R."/>
            <person name="Robben J."/>
            <person name="Grymonprez B."/>
            <person name="Weltjens I."/>
            <person name="Vanstreels E."/>
            <person name="Rieger M."/>
            <person name="Schaefer M."/>
            <person name="Mueller-Auer S."/>
            <person name="Gabel C."/>
            <person name="Fuchs M."/>
            <person name="Duesterhoeft A."/>
            <person name="Fritzc C."/>
            <person name="Holzer E."/>
            <person name="Moestl D."/>
            <person name="Hilbert H."/>
            <person name="Borzym K."/>
            <person name="Langer I."/>
            <person name="Beck A."/>
            <person name="Lehrach H."/>
            <person name="Reinhardt R."/>
            <person name="Pohl T.M."/>
            <person name="Eger P."/>
            <person name="Zimmermann W."/>
            <person name="Wedler H."/>
            <person name="Wambutt R."/>
            <person name="Purnelle B."/>
            <person name="Goffeau A."/>
            <person name="Cadieu E."/>
            <person name="Dreano S."/>
            <person name="Gloux S."/>
            <person name="Lelaure V."/>
            <person name="Mottier S."/>
            <person name="Galibert F."/>
            <person name="Aves S.J."/>
            <person name="Xiang Z."/>
            <person name="Hunt C."/>
            <person name="Moore K."/>
            <person name="Hurst S.M."/>
            <person name="Lucas M."/>
            <person name="Rochet M."/>
            <person name="Gaillardin C."/>
            <person name="Tallada V.A."/>
            <person name="Garzon A."/>
            <person name="Thode G."/>
            <person name="Daga R.R."/>
            <person name="Cruzado L."/>
            <person name="Jimenez J."/>
            <person name="Sanchez M."/>
            <person name="del Rey F."/>
            <person name="Benito J."/>
            <person name="Dominguez A."/>
            <person name="Revuelta J.L."/>
            <person name="Moreno S."/>
            <person name="Armstrong J."/>
            <person name="Forsburg S.L."/>
            <person name="Cerutti L."/>
            <person name="Lowe T."/>
            <person name="McCombie W.R."/>
            <person name="Paulsen I."/>
            <person name="Potashkin J."/>
            <person name="Shpakovski G.V."/>
            <person name="Ussery D."/>
            <person name="Barrell B.G."/>
            <person name="Nurse P."/>
        </authorList>
    </citation>
    <scope>NUCLEOTIDE SEQUENCE [LARGE SCALE GENOMIC DNA]</scope>
    <source>
        <strain>972 / ATCC 24843</strain>
    </source>
</reference>
<reference key="3">
    <citation type="journal article" date="2003" name="Curr. Biol.">
        <title>Mitotic hyperphosphorylation of the fission yeast SIN scaffold protein cdc11p is regulated by the protein kinase cdc7p.</title>
        <authorList>
            <person name="Krapp A."/>
            <person name="Cano E."/>
            <person name="Simanis V."/>
        </authorList>
    </citation>
    <scope>INTERACTION WITH CDC11</scope>
</reference>
<reference key="4">
    <citation type="journal article" date="2006" name="Nat. Biotechnol.">
        <title>ORFeome cloning and global analysis of protein localization in the fission yeast Schizosaccharomyces pombe.</title>
        <authorList>
            <person name="Matsuyama A."/>
            <person name="Arai R."/>
            <person name="Yashiroda Y."/>
            <person name="Shirai A."/>
            <person name="Kamata A."/>
            <person name="Sekido S."/>
            <person name="Kobayashi Y."/>
            <person name="Hashimoto A."/>
            <person name="Hamamoto M."/>
            <person name="Hiraoka Y."/>
            <person name="Horinouchi S."/>
            <person name="Yoshida M."/>
        </authorList>
    </citation>
    <scope>SUBCELLULAR LOCATION [LARGE SCALE ANALYSIS]</scope>
</reference>
<reference key="5">
    <citation type="journal article" date="2008" name="J. Proteome Res.">
        <title>Phosphoproteome analysis of fission yeast.</title>
        <authorList>
            <person name="Wilson-Grady J.T."/>
            <person name="Villen J."/>
            <person name="Gygi S.P."/>
        </authorList>
    </citation>
    <scope>PHOSPHORYLATION [LARGE SCALE ANALYSIS] AT SER-326</scope>
    <scope>IDENTIFICATION BY MASS SPECTROMETRY</scope>
</reference>
<dbReference type="EMBL" id="U59224">
    <property type="protein sequence ID" value="AAC49372.1"/>
    <property type="molecule type" value="Genomic_DNA"/>
</dbReference>
<dbReference type="EMBL" id="CU329670">
    <property type="protein sequence ID" value="CAB60702.1"/>
    <property type="molecule type" value="Genomic_DNA"/>
</dbReference>
<dbReference type="PIR" id="T46570">
    <property type="entry name" value="T46570"/>
</dbReference>
<dbReference type="RefSeq" id="NP_593149.1">
    <property type="nucleotide sequence ID" value="NM_001018546.2"/>
</dbReference>
<dbReference type="BioGRID" id="278423">
    <property type="interactions" value="15"/>
</dbReference>
<dbReference type="FunCoup" id="Q10951">
    <property type="interactions" value="9"/>
</dbReference>
<dbReference type="IntAct" id="Q10951">
    <property type="interactions" value="3"/>
</dbReference>
<dbReference type="MINT" id="Q10951"/>
<dbReference type="STRING" id="284812.Q10951"/>
<dbReference type="iPTMnet" id="Q10951"/>
<dbReference type="PaxDb" id="4896-SPAC222.10c.1"/>
<dbReference type="EnsemblFungi" id="SPAC222.10c.1">
    <property type="protein sequence ID" value="SPAC222.10c.1:pep"/>
    <property type="gene ID" value="SPAC222.10c"/>
</dbReference>
<dbReference type="GeneID" id="2541936"/>
<dbReference type="KEGG" id="spo:2541936"/>
<dbReference type="PomBase" id="SPAC222.10c">
    <property type="gene designation" value="byr4"/>
</dbReference>
<dbReference type="VEuPathDB" id="FungiDB:SPAC222.10c"/>
<dbReference type="eggNOG" id="ENOG502QX1K">
    <property type="taxonomic scope" value="Eukaryota"/>
</dbReference>
<dbReference type="HOGENOM" id="CLU_421008_0_0_1"/>
<dbReference type="InParanoid" id="Q10951"/>
<dbReference type="OMA" id="WELYNIL"/>
<dbReference type="CD-CODE" id="576F0A76">
    <property type="entry name" value="Centrosome"/>
</dbReference>
<dbReference type="PRO" id="PR:Q10951"/>
<dbReference type="Proteomes" id="UP000002485">
    <property type="component" value="Chromosome I"/>
</dbReference>
<dbReference type="GO" id="GO:1990334">
    <property type="term" value="C:Bfa1-Bub2 complex"/>
    <property type="evidence" value="ECO:0000353"/>
    <property type="project" value="PomBase"/>
</dbReference>
<dbReference type="GO" id="GO:0005737">
    <property type="term" value="C:cytoplasm"/>
    <property type="evidence" value="ECO:0000314"/>
    <property type="project" value="PomBase"/>
</dbReference>
<dbReference type="GO" id="GO:0005829">
    <property type="term" value="C:cytosol"/>
    <property type="evidence" value="ECO:0007005"/>
    <property type="project" value="PomBase"/>
</dbReference>
<dbReference type="GO" id="GO:0044732">
    <property type="term" value="C:mitotic spindle pole body"/>
    <property type="evidence" value="ECO:0000314"/>
    <property type="project" value="PomBase"/>
</dbReference>
<dbReference type="GO" id="GO:0071957">
    <property type="term" value="C:old mitotic spindle pole body"/>
    <property type="evidence" value="ECO:0000314"/>
    <property type="project" value="PomBase"/>
</dbReference>
<dbReference type="GO" id="GO:0032991">
    <property type="term" value="C:protein-containing complex"/>
    <property type="evidence" value="ECO:0000314"/>
    <property type="project" value="PomBase"/>
</dbReference>
<dbReference type="GO" id="GO:0005096">
    <property type="term" value="F:GTPase activator activity"/>
    <property type="evidence" value="ECO:0007669"/>
    <property type="project" value="InterPro"/>
</dbReference>
<dbReference type="GO" id="GO:0035591">
    <property type="term" value="F:signaling adaptor activity"/>
    <property type="evidence" value="ECO:0000269"/>
    <property type="project" value="PomBase"/>
</dbReference>
<dbReference type="GO" id="GO:0051301">
    <property type="term" value="P:cell division"/>
    <property type="evidence" value="ECO:0007669"/>
    <property type="project" value="UniProtKB-KW"/>
</dbReference>
<dbReference type="GO" id="GO:0001100">
    <property type="term" value="P:negative regulation of exit from mitosis"/>
    <property type="evidence" value="ECO:0007669"/>
    <property type="project" value="InterPro"/>
</dbReference>
<dbReference type="GO" id="GO:1902413">
    <property type="term" value="P:negative regulation of mitotic cytokinesis"/>
    <property type="evidence" value="ECO:0000316"/>
    <property type="project" value="PomBase"/>
</dbReference>
<dbReference type="GO" id="GO:0031030">
    <property type="term" value="P:negative regulation of septation initiation signaling"/>
    <property type="evidence" value="ECO:0000316"/>
    <property type="project" value="PomBase"/>
</dbReference>
<dbReference type="InterPro" id="IPR034586">
    <property type="entry name" value="Bfa1/Byr4"/>
</dbReference>
<dbReference type="PANTHER" id="PTHR35140">
    <property type="entry name" value="MITOTIC CHECK POINT PROTEIN BFA1"/>
    <property type="match status" value="1"/>
</dbReference>
<dbReference type="PANTHER" id="PTHR35140:SF1">
    <property type="entry name" value="MITOTIC CHECK POINT PROTEIN BFA1"/>
    <property type="match status" value="1"/>
</dbReference>
<proteinExistence type="evidence at protein level"/>
<gene>
    <name type="primary">byr4</name>
    <name type="ORF">SPAC222.10c</name>
</gene>
<feature type="chain" id="PRO_0000065032" description="Protein byr4">
    <location>
        <begin position="1"/>
        <end position="665"/>
    </location>
</feature>
<feature type="region of interest" description="Disordered" evidence="1">
    <location>
        <begin position="96"/>
        <end position="120"/>
    </location>
</feature>
<feature type="region of interest" description="Disordered" evidence="1">
    <location>
        <begin position="196"/>
        <end position="220"/>
    </location>
</feature>
<feature type="region of interest" description="Disordered" evidence="1">
    <location>
        <begin position="288"/>
        <end position="336"/>
    </location>
</feature>
<feature type="region of interest" description="Disordered" evidence="1">
    <location>
        <begin position="404"/>
        <end position="506"/>
    </location>
</feature>
<feature type="compositionally biased region" description="Acidic residues" evidence="1">
    <location>
        <begin position="96"/>
        <end position="106"/>
    </location>
</feature>
<feature type="compositionally biased region" description="Polar residues" evidence="1">
    <location>
        <begin position="205"/>
        <end position="220"/>
    </location>
</feature>
<feature type="compositionally biased region" description="Polar residues" evidence="1">
    <location>
        <begin position="288"/>
        <end position="304"/>
    </location>
</feature>
<feature type="compositionally biased region" description="Polar residues" evidence="1">
    <location>
        <begin position="319"/>
        <end position="336"/>
    </location>
</feature>
<feature type="compositionally biased region" description="Polar residues" evidence="1">
    <location>
        <begin position="407"/>
        <end position="432"/>
    </location>
</feature>
<feature type="modified residue" description="Phosphoserine" evidence="4">
    <location>
        <position position="326"/>
    </location>
</feature>
<organism>
    <name type="scientific">Schizosaccharomyces pombe (strain 972 / ATCC 24843)</name>
    <name type="common">Fission yeast</name>
    <dbReference type="NCBI Taxonomy" id="284812"/>
    <lineage>
        <taxon>Eukaryota</taxon>
        <taxon>Fungi</taxon>
        <taxon>Dikarya</taxon>
        <taxon>Ascomycota</taxon>
        <taxon>Taphrinomycotina</taxon>
        <taxon>Schizosaccharomycetes</taxon>
        <taxon>Schizosaccharomycetales</taxon>
        <taxon>Schizosaccharomycetaceae</taxon>
        <taxon>Schizosaccharomyces</taxon>
    </lineage>
</organism>
<keyword id="KW-0131">Cell cycle</keyword>
<keyword id="KW-0132">Cell division</keyword>
<keyword id="KW-0963">Cytoplasm</keyword>
<keyword id="KW-0498">Mitosis</keyword>
<keyword id="KW-0597">Phosphoprotein</keyword>
<keyword id="KW-1185">Reference proteome</keyword>